<comment type="interaction">
    <interactant intactId="EBI-8767954">
        <id>P0AFT8</id>
    </interactant>
    <interactant intactId="EBI-553586">
        <id>P45579</id>
        <label>hcxA</label>
    </interactant>
    <organismsDiffer>false</organismsDiffer>
    <experiments>3</experiments>
</comment>
<comment type="similarity">
    <text evidence="1">Belongs to the UPF0153 family.</text>
</comment>
<reference key="1">
    <citation type="journal article" date="1996" name="DNA Res.">
        <title>A 460-kb DNA sequence of the Escherichia coli K-12 genome corresponding to the 40.1-50.0 min region on the linkage map.</title>
        <authorList>
            <person name="Itoh T."/>
            <person name="Aiba H."/>
            <person name="Baba T."/>
            <person name="Fujita K."/>
            <person name="Hayashi K."/>
            <person name="Inada T."/>
            <person name="Isono K."/>
            <person name="Kasai H."/>
            <person name="Kimura S."/>
            <person name="Kitakawa M."/>
            <person name="Kitagawa M."/>
            <person name="Makino K."/>
            <person name="Miki T."/>
            <person name="Mizobuchi K."/>
            <person name="Mori H."/>
            <person name="Mori T."/>
            <person name="Motomura K."/>
            <person name="Nakade S."/>
            <person name="Nakamura Y."/>
            <person name="Nashimoto H."/>
            <person name="Nishio Y."/>
            <person name="Oshima T."/>
            <person name="Saito N."/>
            <person name="Sampei G."/>
            <person name="Seki Y."/>
            <person name="Sivasundaram S."/>
            <person name="Tagami H."/>
            <person name="Takeda J."/>
            <person name="Takemoto K."/>
            <person name="Wada C."/>
            <person name="Yamamoto Y."/>
            <person name="Horiuchi T."/>
        </authorList>
    </citation>
    <scope>NUCLEOTIDE SEQUENCE [LARGE SCALE GENOMIC DNA]</scope>
    <source>
        <strain>K12 / W3110 / ATCC 27325 / DSM 5911</strain>
    </source>
</reference>
<reference key="2">
    <citation type="journal article" date="1997" name="Science">
        <title>The complete genome sequence of Escherichia coli K-12.</title>
        <authorList>
            <person name="Blattner F.R."/>
            <person name="Plunkett G. III"/>
            <person name="Bloch C.A."/>
            <person name="Perna N.T."/>
            <person name="Burland V."/>
            <person name="Riley M."/>
            <person name="Collado-Vides J."/>
            <person name="Glasner J.D."/>
            <person name="Rode C.K."/>
            <person name="Mayhew G.F."/>
            <person name="Gregor J."/>
            <person name="Davis N.W."/>
            <person name="Kirkpatrick H.A."/>
            <person name="Goeden M.A."/>
            <person name="Rose D.J."/>
            <person name="Mau B."/>
            <person name="Shao Y."/>
        </authorList>
    </citation>
    <scope>NUCLEOTIDE SEQUENCE [LARGE SCALE GENOMIC DNA]</scope>
    <source>
        <strain>K12 / MG1655 / ATCC 47076</strain>
    </source>
</reference>
<reference key="3">
    <citation type="journal article" date="2006" name="Mol. Syst. Biol.">
        <title>Highly accurate genome sequences of Escherichia coli K-12 strains MG1655 and W3110.</title>
        <authorList>
            <person name="Hayashi K."/>
            <person name="Morooka N."/>
            <person name="Yamamoto Y."/>
            <person name="Fujita K."/>
            <person name="Isono K."/>
            <person name="Choi S."/>
            <person name="Ohtsubo E."/>
            <person name="Baba T."/>
            <person name="Wanner B.L."/>
            <person name="Mori H."/>
            <person name="Horiuchi T."/>
        </authorList>
    </citation>
    <scope>NUCLEOTIDE SEQUENCE [LARGE SCALE GENOMIC DNA]</scope>
    <source>
        <strain>K12 / W3110 / ATCC 27325 / DSM 5911</strain>
    </source>
</reference>
<dbReference type="EMBL" id="U00096">
    <property type="protein sequence ID" value="ABD18689.1"/>
    <property type="molecule type" value="Genomic_DNA"/>
</dbReference>
<dbReference type="EMBL" id="AP009048">
    <property type="protein sequence ID" value="BAE76644.1"/>
    <property type="molecule type" value="Genomic_DNA"/>
</dbReference>
<dbReference type="RefSeq" id="WP_000389030.1">
    <property type="nucleotide sequence ID" value="NZ_STEB01000002.1"/>
</dbReference>
<dbReference type="RefSeq" id="YP_588461.1">
    <property type="nucleotide sequence ID" value="NC_000913.3"/>
</dbReference>
<dbReference type="BioGRID" id="4263348">
    <property type="interactions" value="376"/>
</dbReference>
<dbReference type="BioGRID" id="853529">
    <property type="interactions" value="16"/>
</dbReference>
<dbReference type="FunCoup" id="P0AFT8">
    <property type="interactions" value="18"/>
</dbReference>
<dbReference type="IntAct" id="P0AFT8">
    <property type="interactions" value="19"/>
</dbReference>
<dbReference type="STRING" id="511145.b4502"/>
<dbReference type="PaxDb" id="511145-b4502"/>
<dbReference type="EnsemblBacteria" id="ABD18689">
    <property type="protein sequence ID" value="ABD18689"/>
    <property type="gene ID" value="b4502"/>
</dbReference>
<dbReference type="GeneID" id="4056031"/>
<dbReference type="KEGG" id="ecj:JW5361"/>
<dbReference type="KEGG" id="eco:b4502"/>
<dbReference type="PATRIC" id="fig|1411691.4.peg.67"/>
<dbReference type="eggNOG" id="ENOG5032S46">
    <property type="taxonomic scope" value="Bacteria"/>
</dbReference>
<dbReference type="HOGENOM" id="CLU_148512_0_1_6"/>
<dbReference type="InParanoid" id="P0AFT8"/>
<dbReference type="OMA" id="SAEMCGD"/>
<dbReference type="OrthoDB" id="9803986at2"/>
<dbReference type="PhylomeDB" id="P0AFT8"/>
<dbReference type="BioCyc" id="EcoCyc:MONOMER0-2726"/>
<dbReference type="PRO" id="PR:P0AFT8"/>
<dbReference type="Proteomes" id="UP000000625">
    <property type="component" value="Chromosome"/>
</dbReference>
<dbReference type="InterPro" id="IPR005358">
    <property type="entry name" value="Puta_zinc/iron-chelating_dom"/>
</dbReference>
<dbReference type="InterPro" id="IPR052572">
    <property type="entry name" value="UPF0153_domain"/>
</dbReference>
<dbReference type="PANTHER" id="PTHR36931">
    <property type="entry name" value="UPF0153 PROTEIN YEIW"/>
    <property type="match status" value="1"/>
</dbReference>
<dbReference type="PANTHER" id="PTHR36931:SF1">
    <property type="entry name" value="UPF0153 PROTEIN YEIW"/>
    <property type="match status" value="1"/>
</dbReference>
<dbReference type="Pfam" id="PF03692">
    <property type="entry name" value="CxxCxxCC"/>
    <property type="match status" value="1"/>
</dbReference>
<sequence length="84" mass="8954">MECRPGCGACCTAPSISSPIPGMPDGKPANTPCIQLDEQQRCKIFTSPLRPKVCAGLQASAEMCGNSRQQAMTWLIDLEMLTAP</sequence>
<name>YEIW_ECOLI</name>
<accession>P0AFT8</accession>
<accession>P58039</accession>
<accession>Q2EES7</accession>
<accession>Q2MAR2</accession>
<keyword id="KW-1185">Reference proteome</keyword>
<proteinExistence type="evidence at protein level"/>
<gene>
    <name type="primary">yeiW</name>
    <name type="ordered locus">b4502</name>
    <name type="ordered locus">JW5361</name>
</gene>
<organism>
    <name type="scientific">Escherichia coli (strain K12)</name>
    <dbReference type="NCBI Taxonomy" id="83333"/>
    <lineage>
        <taxon>Bacteria</taxon>
        <taxon>Pseudomonadati</taxon>
        <taxon>Pseudomonadota</taxon>
        <taxon>Gammaproteobacteria</taxon>
        <taxon>Enterobacterales</taxon>
        <taxon>Enterobacteriaceae</taxon>
        <taxon>Escherichia</taxon>
    </lineage>
</organism>
<evidence type="ECO:0000305" key="1"/>
<feature type="chain" id="PRO_0000221615" description="UPF0153 protein YeiW">
    <location>
        <begin position="1"/>
        <end position="84"/>
    </location>
</feature>
<protein>
    <recommendedName>
        <fullName>UPF0153 protein YeiW</fullName>
    </recommendedName>
</protein>